<reference key="1">
    <citation type="submission" date="2007-07" db="EMBL/GenBank/DDBJ databases">
        <authorList>
            <consortium name="NIH - Mammalian Gene Collection (MGC) project"/>
        </authorList>
    </citation>
    <scope>NUCLEOTIDE SEQUENCE [LARGE SCALE MRNA]</scope>
    <source>
        <strain>Hereford</strain>
        <tissue>Fetal liver</tissue>
    </source>
</reference>
<feature type="chain" id="PRO_0000315775" description="N-acetylglucosamine-6-phosphate deacetylase">
    <location>
        <begin position="1"/>
        <end position="409"/>
    </location>
</feature>
<feature type="active site" description="Proton donor/acceptor" evidence="1">
    <location>
        <position position="294"/>
    </location>
</feature>
<feature type="binding site" evidence="1">
    <location>
        <position position="143"/>
    </location>
    <ligand>
        <name>a divalent metal cation</name>
        <dbReference type="ChEBI" id="CHEBI:60240"/>
    </ligand>
</feature>
<feature type="binding site" evidence="1">
    <location>
        <begin position="154"/>
        <end position="155"/>
    </location>
    <ligand>
        <name>substrate</name>
    </ligand>
</feature>
<feature type="binding site" evidence="1">
    <location>
        <position position="211"/>
    </location>
    <ligand>
        <name>a divalent metal cation</name>
        <dbReference type="ChEBI" id="CHEBI:60240"/>
    </ligand>
</feature>
<feature type="binding site" evidence="1">
    <location>
        <position position="232"/>
    </location>
    <ligand>
        <name>a divalent metal cation</name>
        <dbReference type="ChEBI" id="CHEBI:60240"/>
    </ligand>
</feature>
<feature type="binding site" evidence="1">
    <location>
        <begin position="235"/>
        <end position="236"/>
    </location>
    <ligand>
        <name>substrate</name>
    </ligand>
</feature>
<feature type="binding site" evidence="1">
    <location>
        <position position="243"/>
    </location>
    <ligand>
        <name>substrate</name>
    </ligand>
</feature>
<feature type="binding site" evidence="1">
    <location>
        <begin position="269"/>
        <end position="272"/>
    </location>
    <ligand>
        <name>substrate</name>
    </ligand>
</feature>
<feature type="binding site" evidence="1">
    <location>
        <begin position="328"/>
        <end position="330"/>
    </location>
    <ligand>
        <name>substrate</name>
    </ligand>
</feature>
<accession>A7MBC0</accession>
<dbReference type="EC" id="3.5.1.25" evidence="2"/>
<dbReference type="EMBL" id="BC151478">
    <property type="protein sequence ID" value="AAI51479.1"/>
    <property type="molecule type" value="mRNA"/>
</dbReference>
<dbReference type="RefSeq" id="NP_001094574.1">
    <property type="nucleotide sequence ID" value="NM_001101104.2"/>
</dbReference>
<dbReference type="SMR" id="A7MBC0"/>
<dbReference type="FunCoup" id="A7MBC0">
    <property type="interactions" value="564"/>
</dbReference>
<dbReference type="STRING" id="9913.ENSBTAP00000063678"/>
<dbReference type="PaxDb" id="9913-ENSBTAP00000001355"/>
<dbReference type="Ensembl" id="ENSBTAT00000084975.2">
    <property type="protein sequence ID" value="ENSBTAP00000063678.2"/>
    <property type="gene ID" value="ENSBTAG00000001022.7"/>
</dbReference>
<dbReference type="GeneID" id="521401"/>
<dbReference type="KEGG" id="bta:521401"/>
<dbReference type="CTD" id="51005"/>
<dbReference type="VEuPathDB" id="HostDB:ENSBTAG00000001022"/>
<dbReference type="eggNOG" id="KOG3892">
    <property type="taxonomic scope" value="Eukaryota"/>
</dbReference>
<dbReference type="GeneTree" id="ENSGT00390000012605"/>
<dbReference type="HOGENOM" id="CLU_032482_0_2_1"/>
<dbReference type="InParanoid" id="A7MBC0"/>
<dbReference type="OMA" id="PCRKGAH"/>
<dbReference type="OrthoDB" id="10264777at2759"/>
<dbReference type="TreeFam" id="TF315036"/>
<dbReference type="Reactome" id="R-BTA-446210">
    <property type="pathway name" value="Synthesis of UDP-N-acetyl-glucosamine"/>
</dbReference>
<dbReference type="UniPathway" id="UPA00629"/>
<dbReference type="CD-CODE" id="D7FE2080">
    <property type="entry name" value="Nucleolus"/>
</dbReference>
<dbReference type="Proteomes" id="UP000009136">
    <property type="component" value="Chromosome 25"/>
</dbReference>
<dbReference type="Bgee" id="ENSBTAG00000001022">
    <property type="expression patterns" value="Expressed in Ammon's horn and 103 other cell types or tissues"/>
</dbReference>
<dbReference type="GO" id="GO:0046872">
    <property type="term" value="F:metal ion binding"/>
    <property type="evidence" value="ECO:0007669"/>
    <property type="project" value="UniProtKB-KW"/>
</dbReference>
<dbReference type="GO" id="GO:0008448">
    <property type="term" value="F:N-acetylglucosamine-6-phosphate deacetylase activity"/>
    <property type="evidence" value="ECO:0000250"/>
    <property type="project" value="UniProtKB"/>
</dbReference>
<dbReference type="GO" id="GO:0006046">
    <property type="term" value="P:N-acetylglucosamine catabolic process"/>
    <property type="evidence" value="ECO:0000318"/>
    <property type="project" value="GO_Central"/>
</dbReference>
<dbReference type="GO" id="GO:0019262">
    <property type="term" value="P:N-acetylneuraminate catabolic process"/>
    <property type="evidence" value="ECO:0007669"/>
    <property type="project" value="UniProtKB-UniPathway"/>
</dbReference>
<dbReference type="CDD" id="cd00854">
    <property type="entry name" value="NagA"/>
    <property type="match status" value="1"/>
</dbReference>
<dbReference type="FunFam" id="3.20.20.140:FF:000023">
    <property type="entry name" value="N-acetylglucosamine-6-phosphate deacetylase"/>
    <property type="match status" value="1"/>
</dbReference>
<dbReference type="Gene3D" id="3.20.20.140">
    <property type="entry name" value="Metal-dependent hydrolases"/>
    <property type="match status" value="1"/>
</dbReference>
<dbReference type="Gene3D" id="2.30.40.10">
    <property type="entry name" value="Urease, subunit C, domain 1"/>
    <property type="match status" value="1"/>
</dbReference>
<dbReference type="InterPro" id="IPR006680">
    <property type="entry name" value="Amidohydro-rel"/>
</dbReference>
<dbReference type="InterPro" id="IPR003764">
    <property type="entry name" value="GlcNAc_6-P_deAcase"/>
</dbReference>
<dbReference type="InterPro" id="IPR011059">
    <property type="entry name" value="Metal-dep_hydrolase_composite"/>
</dbReference>
<dbReference type="InterPro" id="IPR032466">
    <property type="entry name" value="Metal_Hydrolase"/>
</dbReference>
<dbReference type="NCBIfam" id="TIGR00221">
    <property type="entry name" value="nagA"/>
    <property type="match status" value="1"/>
</dbReference>
<dbReference type="PANTHER" id="PTHR11113">
    <property type="entry name" value="N-ACETYLGLUCOSAMINE-6-PHOSPHATE DEACETYLASE"/>
    <property type="match status" value="1"/>
</dbReference>
<dbReference type="PANTHER" id="PTHR11113:SF14">
    <property type="entry name" value="N-ACETYLGLUCOSAMINE-6-PHOSPHATE DEACETYLASE"/>
    <property type="match status" value="1"/>
</dbReference>
<dbReference type="Pfam" id="PF01979">
    <property type="entry name" value="Amidohydro_1"/>
    <property type="match status" value="1"/>
</dbReference>
<dbReference type="PIRSF" id="PIRSF038994">
    <property type="entry name" value="NagA"/>
    <property type="match status" value="1"/>
</dbReference>
<dbReference type="SUPFAM" id="SSF51338">
    <property type="entry name" value="Composite domain of metallo-dependent hydrolases"/>
    <property type="match status" value="1"/>
</dbReference>
<dbReference type="SUPFAM" id="SSF51556">
    <property type="entry name" value="Metallo-dependent hydrolases"/>
    <property type="match status" value="1"/>
</dbReference>
<keyword id="KW-0119">Carbohydrate metabolism</keyword>
<keyword id="KW-0378">Hydrolase</keyword>
<keyword id="KW-0479">Metal-binding</keyword>
<keyword id="KW-1185">Reference proteome</keyword>
<protein>
    <recommendedName>
        <fullName evidence="2">N-acetylglucosamine-6-phosphate deacetylase</fullName>
        <shortName evidence="2">GlcNAc 6-P deacetylase</shortName>
        <ecNumber evidence="2">3.5.1.25</ecNumber>
    </recommendedName>
    <alternativeName>
        <fullName evidence="2">Amidohydrolase domain-containing protein 2</fullName>
    </alternativeName>
</protein>
<organism>
    <name type="scientific">Bos taurus</name>
    <name type="common">Bovine</name>
    <dbReference type="NCBI Taxonomy" id="9913"/>
    <lineage>
        <taxon>Eukaryota</taxon>
        <taxon>Metazoa</taxon>
        <taxon>Chordata</taxon>
        <taxon>Craniata</taxon>
        <taxon>Vertebrata</taxon>
        <taxon>Euteleostomi</taxon>
        <taxon>Mammalia</taxon>
        <taxon>Eutheria</taxon>
        <taxon>Laurasiatheria</taxon>
        <taxon>Artiodactyla</taxon>
        <taxon>Ruminantia</taxon>
        <taxon>Pecora</taxon>
        <taxon>Bovidae</taxon>
        <taxon>Bovinae</taxon>
        <taxon>Bos</taxon>
    </lineage>
</organism>
<gene>
    <name type="primary">AMDHD2</name>
</gene>
<comment type="function">
    <text evidence="2">Hydrolyzes the N-glycolyl group from N-glycolylglucosamine 6-phosphate (GlcNGc-6-P) in the N-glycolylneuraminic acid (Neu5Gc) degradation pathway.</text>
</comment>
<comment type="catalytic activity">
    <reaction evidence="2">
        <text>N-acetyl-D-glucosamine 6-phosphate + H2O = D-glucosamine 6-phosphate + acetate</text>
        <dbReference type="Rhea" id="RHEA:22936"/>
        <dbReference type="ChEBI" id="CHEBI:15377"/>
        <dbReference type="ChEBI" id="CHEBI:30089"/>
        <dbReference type="ChEBI" id="CHEBI:57513"/>
        <dbReference type="ChEBI" id="CHEBI:58725"/>
        <dbReference type="EC" id="3.5.1.25"/>
    </reaction>
</comment>
<comment type="cofactor">
    <cofactor evidence="1">
        <name>a divalent metal cation</name>
        <dbReference type="ChEBI" id="CHEBI:60240"/>
    </cofactor>
    <text evidence="1">Binds 1 divalent metal cation per subunit.</text>
</comment>
<comment type="pathway">
    <text evidence="2">Amino-sugar metabolism; N-acetylneuraminate degradation.</text>
</comment>
<comment type="similarity">
    <text evidence="3">Belongs to the metallo-dependent hydrolases superfamily. NagA family.</text>
</comment>
<evidence type="ECO:0000250" key="1">
    <source>
        <dbReference type="UniProtKB" id="P0AF18"/>
    </source>
</evidence>
<evidence type="ECO:0000250" key="2">
    <source>
        <dbReference type="UniProtKB" id="Q9Y303"/>
    </source>
</evidence>
<evidence type="ECO:0000305" key="3"/>
<sequence>MRGGQGAARAPVIQFTNCRILRGGALLREDLWVRGGRILDPEKLFFEERRVADEQRDCGGCILAPGFIDVQINGGFGVDFSQASEDVGSGVALVARRILSHGVTSFCPTLVTSPLEVYHKVLPQIPVKSGGPHGAGVLGVHLEGPFISREKRGAHPEAHLRSFEADAFQDVLATYGGLDNVRIVTLAPELGHSQEVIRALTALGICVSLGHSVADLGTAEEAVQSGATFITHLFNAMLPFHHRDPGIVGLLTSDRLPAGRHIFYGMIADGIHTNPAALRIAHRAHPKGLVLVTDAVPALGLGNGRHTLGQQEVEVDGLTAYVAGTNTLSGSIAPMDTCVRHFLQATGCSVESALEAASLHPAQLLGLEKRKGTLDFGADADFVVLDDSLHVRATYISGELVWQVEEARP</sequence>
<proteinExistence type="evidence at transcript level"/>
<name>NAGA_BOVIN</name>